<reference key="1">
    <citation type="journal article" date="2002" name="Proc. Natl. Acad. Sci. U.S.A.">
        <title>Potentiation of serum response factor activity by a family of myocardin-related transcription factors.</title>
        <authorList>
            <person name="Wang D.-Z."/>
            <person name="Li S."/>
            <person name="Hockemeyer D."/>
            <person name="Sutherland L."/>
            <person name="Wang Z."/>
            <person name="Schratt G."/>
            <person name="Richardson J.A."/>
            <person name="Nordheim A."/>
            <person name="Olson E.N."/>
        </authorList>
    </citation>
    <scope>NUCLEOTIDE SEQUENCE [MRNA]</scope>
    <scope>FUNCTION</scope>
    <scope>TISSUE SPECIFICITY</scope>
    <scope>DEVELOPMENTAL STAGE</scope>
    <scope>INTERACTION WITH SRF</scope>
    <source>
        <strain>C57BL/6J</strain>
        <tissue>Embryo</tissue>
    </source>
</reference>
<reference key="2">
    <citation type="journal article" date="2006" name="Mol. Cell. Proteomics">
        <title>O-linked N-acetylglucosamine proteomics of postsynaptic density preparations using lectin weak affinity chromatography and mass spectrometry.</title>
        <authorList>
            <person name="Vosseller K."/>
            <person name="Trinidad J.C."/>
            <person name="Chalkley R.J."/>
            <person name="Specht C.G."/>
            <person name="Thalhammer A."/>
            <person name="Lynn A.J."/>
            <person name="Snedecor J.O."/>
            <person name="Guan S."/>
            <person name="Medzihradszky K.F."/>
            <person name="Maltby D.A."/>
            <person name="Schoepfer R."/>
            <person name="Burlingame A.L."/>
        </authorList>
    </citation>
    <scope>GLYCOSYLATION [LARGE SCALE ANALYSIS]</scope>
    <source>
        <tissue>Brain</tissue>
    </source>
</reference>
<reference key="3">
    <citation type="journal article" date="2009" name="Mol. Cell. Proteomics">
        <title>Large scale localization of protein phosphorylation by use of electron capture dissociation mass spectrometry.</title>
        <authorList>
            <person name="Sweet S.M."/>
            <person name="Bailey C.M."/>
            <person name="Cunningham D.L."/>
            <person name="Heath J.K."/>
            <person name="Cooper H.J."/>
        </authorList>
    </citation>
    <scope>IDENTIFICATION BY MASS SPECTROMETRY [LARGE SCALE ANALYSIS]</scope>
    <source>
        <tissue>Embryonic fibroblast</tissue>
    </source>
</reference>
<reference key="4">
    <citation type="journal article" date="2010" name="Cell">
        <title>A tissue-specific atlas of mouse protein phosphorylation and expression.</title>
        <authorList>
            <person name="Huttlin E.L."/>
            <person name="Jedrychowski M.P."/>
            <person name="Elias J.E."/>
            <person name="Goswami T."/>
            <person name="Rad R."/>
            <person name="Beausoleil S.A."/>
            <person name="Villen J."/>
            <person name="Haas W."/>
            <person name="Sowa M.E."/>
            <person name="Gygi S.P."/>
        </authorList>
    </citation>
    <scope>PHOSPHORYLATION [LARGE SCALE ANALYSIS] AT SER-66 AND SER-531</scope>
    <scope>IDENTIFICATION BY MASS SPECTROMETRY [LARGE SCALE ANALYSIS]</scope>
    <source>
        <tissue>Brain</tissue>
        <tissue>Kidney</tissue>
        <tissue>Lung</tissue>
        <tissue>Pancreas</tissue>
        <tissue>Spleen</tissue>
        <tissue>Testis</tissue>
    </source>
</reference>
<name>MRTFB_MOUSE</name>
<feature type="chain" id="PRO_0000126629" description="Myocardin-related transcription factor B">
    <location>
        <begin position="1"/>
        <end position="1080"/>
    </location>
</feature>
<feature type="repeat" description="RPEL 1">
    <location>
        <begin position="40"/>
        <end position="65"/>
    </location>
</feature>
<feature type="repeat" description="RPEL 2">
    <location>
        <begin position="84"/>
        <end position="109"/>
    </location>
</feature>
<feature type="repeat" description="RPEL 3">
    <location>
        <begin position="128"/>
        <end position="153"/>
    </location>
</feature>
<feature type="domain" description="SAP" evidence="4">
    <location>
        <begin position="383"/>
        <end position="417"/>
    </location>
</feature>
<feature type="region of interest" description="Disordered" evidence="5">
    <location>
        <begin position="170"/>
        <end position="222"/>
    </location>
</feature>
<feature type="region of interest" description="Disordered" evidence="5">
    <location>
        <begin position="234"/>
        <end position="311"/>
    </location>
</feature>
<feature type="region of interest" description="Disordered" evidence="5">
    <location>
        <begin position="352"/>
        <end position="384"/>
    </location>
</feature>
<feature type="region of interest" description="Disordered" evidence="5">
    <location>
        <begin position="477"/>
        <end position="501"/>
    </location>
</feature>
<feature type="region of interest" description="Required for interaction with itself and with MRTFA" evidence="1">
    <location>
        <begin position="557"/>
        <end position="585"/>
    </location>
</feature>
<feature type="region of interest" description="Disordered" evidence="5">
    <location>
        <begin position="588"/>
        <end position="646"/>
    </location>
</feature>
<feature type="region of interest" description="Disordered" evidence="5">
    <location>
        <begin position="794"/>
        <end position="846"/>
    </location>
</feature>
<feature type="region of interest" description="Disordered" evidence="5">
    <location>
        <begin position="969"/>
        <end position="988"/>
    </location>
</feature>
<feature type="coiled-coil region" evidence="3">
    <location>
        <begin position="539"/>
        <end position="594"/>
    </location>
</feature>
<feature type="compositionally biased region" description="Polar residues" evidence="5">
    <location>
        <begin position="188"/>
        <end position="200"/>
    </location>
</feature>
<feature type="compositionally biased region" description="Polar residues" evidence="5">
    <location>
        <begin position="240"/>
        <end position="259"/>
    </location>
</feature>
<feature type="compositionally biased region" description="Basic and acidic residues" evidence="5">
    <location>
        <begin position="272"/>
        <end position="287"/>
    </location>
</feature>
<feature type="compositionally biased region" description="Low complexity" evidence="5">
    <location>
        <begin position="358"/>
        <end position="370"/>
    </location>
</feature>
<feature type="compositionally biased region" description="Pro residues" evidence="5">
    <location>
        <begin position="595"/>
        <end position="606"/>
    </location>
</feature>
<feature type="compositionally biased region" description="Polar residues" evidence="5">
    <location>
        <begin position="794"/>
        <end position="821"/>
    </location>
</feature>
<feature type="compositionally biased region" description="Polar residues" evidence="5">
    <location>
        <begin position="972"/>
        <end position="983"/>
    </location>
</feature>
<feature type="modified residue" description="Phosphoserine" evidence="10">
    <location>
        <position position="66"/>
    </location>
</feature>
<feature type="modified residue" description="Phosphoserine" evidence="10">
    <location>
        <position position="531"/>
    </location>
</feature>
<feature type="modified residue" description="Phosphoserine" evidence="2">
    <location>
        <position position="535"/>
    </location>
</feature>
<feature type="modified residue" description="Phosphoserine" evidence="2">
    <location>
        <position position="537"/>
    </location>
</feature>
<feature type="modified residue" description="Phosphoserine" evidence="2">
    <location>
        <position position="913"/>
    </location>
</feature>
<feature type="cross-link" description="Glycyl lysine isopeptide (Lys-Gly) (interchain with G-Cter in SUMO1)" evidence="2">
    <location>
        <position position="622"/>
    </location>
</feature>
<accession>P59759</accession>
<sequence length="1080" mass="117547">MIDSSKKQPQGFPEILTAEDFEPFKEKECLEGSNQKSLKEVLQLRLQQRRTREQLVDQGIMPPLKSPAAFHEQIKSLERARTENFLKHKIRSRPDRSELVRMHILEETFAEPSLQATQMKLKRARLADDLNEKIAQRPGPMELVEKNILPVDSSVKEAIIGVVKEDYPHTHGEFSFDEDSSDALSPDQPASQESQGSAASPSEPKVSASPPPVTASTPAQFTSVSPAVPEFLKTPLTADQPPTRSTAPVLPTNTVSSAKSGPMLVKQSHPKNPNDKHRSKKCKDPKPRVKKLKYHQYIPPNQKGEKSEPQMDSNYARLLQQQQLFLQLQILSQQQQQQQQQHYNYQTILPAPIKTDKNSSSGSNSGSSSSMPARRPGPLPSSLDDLKVSELKTELKLRGLPVSGTKPDLIERLKPYQEVTSSNLATGSIVAVSSATIVTSNPEVTVALPVTTLHNAVTSSVSTFKADLALPATSSVPHVENAHSPLPISPSPSEQSSLSTDDTNMTDTFTEIMTMMSPSQLLCSSPLRVVSHDDSLSPSSSTLSTLELDAAEKDRKLQEKEKQIEELKRKLEQEQKLVEVLKMQLEVEKRGQQRPPDPQPSDPPHPFNTSDPKHGSVGSSIKDEASLPDCSSPQQPITVPGHSVGQPISTGSQTLVAKKTVVVKQEVPMAQAEQQNVVSQFYLSSQGQPPALVAQPQALLTTQTTQLLLPVSIQGSNVTSVQLPVGSLQLQTPAQGRVQAQPHVAAATQVPAAALPSALTSALPQKQEAFPQHVLGQPQPVRKVFTNSAPNTVLQYQRQPGPTNQQPFVSKTSNPALQSRTAPLAPLQNGPSLASKPSSPPPPQQFVVQHSLFATPITKTKDPPRYEEAIKQTRSTQPALPEVSSVHSQQMDDLFDILIKSGEISFPIKEEPSPISKMKPVTASITTMPVNTVVSRPPPQVQIAPPVSLEPVNSLSASLENQLEAFLDGTLPSATDTGPLQNSSEDRESFSLIEDLQNDLLSHSSMLYQSHSPMETSEAQLVSGTPCLSLDLSDSNLDNMEWLDITMPTTSSGLTPLSTTAPSMFSADFLDPQDLPLPWD</sequence>
<protein>
    <recommendedName>
        <fullName evidence="8">Myocardin-related transcription factor B</fullName>
        <shortName evidence="8">MRTF-B</shortName>
    </recommendedName>
    <alternativeName>
        <fullName>MKL/myocardin-like protein 2</fullName>
    </alternativeName>
</protein>
<evidence type="ECO:0000250" key="1"/>
<evidence type="ECO:0000250" key="2">
    <source>
        <dbReference type="UniProtKB" id="Q9ULH7"/>
    </source>
</evidence>
<evidence type="ECO:0000255" key="3"/>
<evidence type="ECO:0000255" key="4">
    <source>
        <dbReference type="PROSITE-ProRule" id="PRU00186"/>
    </source>
</evidence>
<evidence type="ECO:0000256" key="5">
    <source>
        <dbReference type="SAM" id="MobiDB-lite"/>
    </source>
</evidence>
<evidence type="ECO:0000269" key="6">
    <source>
    </source>
</evidence>
<evidence type="ECO:0000269" key="7">
    <source>
    </source>
</evidence>
<evidence type="ECO:0000305" key="8"/>
<evidence type="ECO:0000312" key="9">
    <source>
        <dbReference type="MGI" id="MGI:3050795"/>
    </source>
</evidence>
<evidence type="ECO:0007744" key="10">
    <source>
    </source>
</evidence>
<proteinExistence type="evidence at protein level"/>
<gene>
    <name type="primary">Mrtfb</name>
    <name evidence="9" type="synonym">Mkl2</name>
</gene>
<comment type="function">
    <text evidence="6">Acts as a transcriptional coactivator of serum response factor (SRF). Required for skeletal myogenic differentiation.</text>
</comment>
<comment type="subunit">
    <text evidence="6">Interacts with MRTFA and SRF.</text>
</comment>
<comment type="subcellular location">
    <subcellularLocation>
        <location evidence="1">Nucleus</location>
    </subcellularLocation>
</comment>
<comment type="tissue specificity">
    <text evidence="6">Widely expressed. High expression in heart, brain and testis. Lower expression in lung, liver and kidney.</text>
</comment>
<comment type="developmental stage">
    <text evidence="6">Detected throughout the embryo at 10.5 dpc. High expression in epithelial cells of the lung, kidney, bladder, colon, testis, in the smooth muscle of the colon and small intestines, and in the mesenchymal cells adjacent to the olfactory epithelium at 15.5 dpc.</text>
</comment>
<comment type="domain">
    <text evidence="1">The N-terminal region is required for nuclear localization and the C-terminal region mediates transcriptional activity.</text>
</comment>
<comment type="PTM">
    <text evidence="7">O-glycosylated.</text>
</comment>
<organism>
    <name type="scientific">Mus musculus</name>
    <name type="common">Mouse</name>
    <dbReference type="NCBI Taxonomy" id="10090"/>
    <lineage>
        <taxon>Eukaryota</taxon>
        <taxon>Metazoa</taxon>
        <taxon>Chordata</taxon>
        <taxon>Craniata</taxon>
        <taxon>Vertebrata</taxon>
        <taxon>Euteleostomi</taxon>
        <taxon>Mammalia</taxon>
        <taxon>Eutheria</taxon>
        <taxon>Euarchontoglires</taxon>
        <taxon>Glires</taxon>
        <taxon>Rodentia</taxon>
        <taxon>Myomorpha</taxon>
        <taxon>Muroidea</taxon>
        <taxon>Muridae</taxon>
        <taxon>Murinae</taxon>
        <taxon>Mus</taxon>
        <taxon>Mus</taxon>
    </lineage>
</organism>
<keyword id="KW-0010">Activator</keyword>
<keyword id="KW-0175">Coiled coil</keyword>
<keyword id="KW-0217">Developmental protein</keyword>
<keyword id="KW-0221">Differentiation</keyword>
<keyword id="KW-0325">Glycoprotein</keyword>
<keyword id="KW-1017">Isopeptide bond</keyword>
<keyword id="KW-0517">Myogenesis</keyword>
<keyword id="KW-0539">Nucleus</keyword>
<keyword id="KW-0597">Phosphoprotein</keyword>
<keyword id="KW-1185">Reference proteome</keyword>
<keyword id="KW-0677">Repeat</keyword>
<keyword id="KW-0804">Transcription</keyword>
<keyword id="KW-0805">Transcription regulation</keyword>
<keyword id="KW-0832">Ubl conjugation</keyword>
<dbReference type="EMBL" id="AF532598">
    <property type="protein sequence ID" value="AAN33042.1"/>
    <property type="molecule type" value="mRNA"/>
</dbReference>
<dbReference type="CCDS" id="CCDS37258.1"/>
<dbReference type="RefSeq" id="NP_705816.2">
    <property type="nucleotide sequence ID" value="NM_153588.3"/>
</dbReference>
<dbReference type="SMR" id="P59759"/>
<dbReference type="BioGRID" id="232120">
    <property type="interactions" value="4"/>
</dbReference>
<dbReference type="DIP" id="DIP-60885N"/>
<dbReference type="FunCoup" id="P59759">
    <property type="interactions" value="1910"/>
</dbReference>
<dbReference type="IntAct" id="P59759">
    <property type="interactions" value="2"/>
</dbReference>
<dbReference type="STRING" id="10090.ENSMUSP00000009713"/>
<dbReference type="GlyGen" id="P59759">
    <property type="glycosylation" value="10 sites, 1 N-linked glycan (1 site), 1 O-linked glycan (8 sites)"/>
</dbReference>
<dbReference type="iPTMnet" id="P59759"/>
<dbReference type="PhosphoSitePlus" id="P59759"/>
<dbReference type="jPOST" id="P59759"/>
<dbReference type="PaxDb" id="10090-ENSMUSP00000009713"/>
<dbReference type="ProteomicsDB" id="295635"/>
<dbReference type="Pumba" id="P59759"/>
<dbReference type="DNASU" id="239719"/>
<dbReference type="GeneID" id="239719"/>
<dbReference type="KEGG" id="mmu:239719"/>
<dbReference type="AGR" id="MGI:3050795"/>
<dbReference type="CTD" id="57496"/>
<dbReference type="MGI" id="MGI:3050795">
    <property type="gene designation" value="Mrtfb"/>
</dbReference>
<dbReference type="eggNOG" id="ENOG502QU1Z">
    <property type="taxonomic scope" value="Eukaryota"/>
</dbReference>
<dbReference type="InParanoid" id="P59759"/>
<dbReference type="OrthoDB" id="197676at2759"/>
<dbReference type="PhylomeDB" id="P59759"/>
<dbReference type="BioGRID-ORCS" id="239719">
    <property type="hits" value="1 hit in 75 CRISPR screens"/>
</dbReference>
<dbReference type="ChiTaRS" id="Mrtfb">
    <property type="organism name" value="mouse"/>
</dbReference>
<dbReference type="PRO" id="PR:P59759"/>
<dbReference type="Proteomes" id="UP000000589">
    <property type="component" value="Unplaced"/>
</dbReference>
<dbReference type="RNAct" id="P59759">
    <property type="molecule type" value="protein"/>
</dbReference>
<dbReference type="GO" id="GO:0005737">
    <property type="term" value="C:cytoplasm"/>
    <property type="evidence" value="ECO:0000314"/>
    <property type="project" value="MGI"/>
</dbReference>
<dbReference type="GO" id="GO:0005634">
    <property type="term" value="C:nucleus"/>
    <property type="evidence" value="ECO:0000305"/>
    <property type="project" value="UniProtKB"/>
</dbReference>
<dbReference type="GO" id="GO:0003779">
    <property type="term" value="F:actin binding"/>
    <property type="evidence" value="ECO:0000314"/>
    <property type="project" value="MGI"/>
</dbReference>
<dbReference type="GO" id="GO:0003700">
    <property type="term" value="F:DNA-binding transcription factor activity"/>
    <property type="evidence" value="ECO:0000314"/>
    <property type="project" value="MGI"/>
</dbReference>
<dbReference type="GO" id="GO:0003713">
    <property type="term" value="F:transcription coactivator activity"/>
    <property type="evidence" value="ECO:0000314"/>
    <property type="project" value="UniProtKB"/>
</dbReference>
<dbReference type="GO" id="GO:0030036">
    <property type="term" value="P:actin cytoskeleton organization"/>
    <property type="evidence" value="ECO:0000316"/>
    <property type="project" value="MGI"/>
</dbReference>
<dbReference type="GO" id="GO:0048514">
    <property type="term" value="P:blood vessel morphogenesis"/>
    <property type="evidence" value="ECO:0000315"/>
    <property type="project" value="MGI"/>
</dbReference>
<dbReference type="GO" id="GO:0048738">
    <property type="term" value="P:cardiac muscle tissue development"/>
    <property type="evidence" value="ECO:0000315"/>
    <property type="project" value="MGI"/>
</dbReference>
<dbReference type="GO" id="GO:0048568">
    <property type="term" value="P:embryonic organ development"/>
    <property type="evidence" value="ECO:0000315"/>
    <property type="project" value="MGI"/>
</dbReference>
<dbReference type="GO" id="GO:0030900">
    <property type="term" value="P:forebrain development"/>
    <property type="evidence" value="ECO:0000316"/>
    <property type="project" value="MGI"/>
</dbReference>
<dbReference type="GO" id="GO:0010467">
    <property type="term" value="P:gene expression"/>
    <property type="evidence" value="ECO:0000315"/>
    <property type="project" value="MGI"/>
</dbReference>
<dbReference type="GO" id="GO:0007507">
    <property type="term" value="P:heart development"/>
    <property type="evidence" value="ECO:0000315"/>
    <property type="project" value="MGI"/>
</dbReference>
<dbReference type="GO" id="GO:0003007">
    <property type="term" value="P:heart morphogenesis"/>
    <property type="evidence" value="ECO:0000315"/>
    <property type="project" value="MGI"/>
</dbReference>
<dbReference type="GO" id="GO:0001701">
    <property type="term" value="P:in utero embryonic development"/>
    <property type="evidence" value="ECO:0000315"/>
    <property type="project" value="MGI"/>
</dbReference>
<dbReference type="GO" id="GO:0001889">
    <property type="term" value="P:liver development"/>
    <property type="evidence" value="ECO:0000315"/>
    <property type="project" value="MGI"/>
</dbReference>
<dbReference type="GO" id="GO:0007517">
    <property type="term" value="P:muscle organ development"/>
    <property type="evidence" value="ECO:0007669"/>
    <property type="project" value="UniProtKB-KW"/>
</dbReference>
<dbReference type="GO" id="GO:0001764">
    <property type="term" value="P:neuron migration"/>
    <property type="evidence" value="ECO:0000316"/>
    <property type="project" value="MGI"/>
</dbReference>
<dbReference type="GO" id="GO:0031175">
    <property type="term" value="P:neuron projection development"/>
    <property type="evidence" value="ECO:0000316"/>
    <property type="project" value="MGI"/>
</dbReference>
<dbReference type="GO" id="GO:0045893">
    <property type="term" value="P:positive regulation of DNA-templated transcription"/>
    <property type="evidence" value="ECO:0000314"/>
    <property type="project" value="MGI"/>
</dbReference>
<dbReference type="GO" id="GO:0045844">
    <property type="term" value="P:positive regulation of striated muscle tissue development"/>
    <property type="evidence" value="ECO:0000250"/>
    <property type="project" value="UniProtKB"/>
</dbReference>
<dbReference type="GO" id="GO:0045944">
    <property type="term" value="P:positive regulation of transcription by RNA polymerase II"/>
    <property type="evidence" value="ECO:0000314"/>
    <property type="project" value="UniProtKB"/>
</dbReference>
<dbReference type="GO" id="GO:0010468">
    <property type="term" value="P:regulation of gene expression"/>
    <property type="evidence" value="ECO:0000315"/>
    <property type="project" value="MGI"/>
</dbReference>
<dbReference type="GO" id="GO:0035886">
    <property type="term" value="P:vascular associated smooth muscle cell differentiation"/>
    <property type="evidence" value="ECO:0000315"/>
    <property type="project" value="MGI"/>
</dbReference>
<dbReference type="FunFam" id="1.10.720.30:FF:000002">
    <property type="entry name" value="Myocardin related transcription factor A"/>
    <property type="match status" value="1"/>
</dbReference>
<dbReference type="Gene3D" id="6.10.140.2040">
    <property type="match status" value="1"/>
</dbReference>
<dbReference type="Gene3D" id="6.10.150.10">
    <property type="match status" value="1"/>
</dbReference>
<dbReference type="Gene3D" id="1.10.720.30">
    <property type="entry name" value="SAP domain"/>
    <property type="match status" value="1"/>
</dbReference>
<dbReference type="InterPro" id="IPR043451">
    <property type="entry name" value="Myocardin-like"/>
</dbReference>
<dbReference type="InterPro" id="IPR004018">
    <property type="entry name" value="RPEL_repeat"/>
</dbReference>
<dbReference type="InterPro" id="IPR003034">
    <property type="entry name" value="SAP_dom"/>
</dbReference>
<dbReference type="InterPro" id="IPR036361">
    <property type="entry name" value="SAP_dom_sf"/>
</dbReference>
<dbReference type="PANTHER" id="PTHR22793:SF5">
    <property type="entry name" value="MYOCARDIN-RELATED TRANSCRIPTION FACTOR B"/>
    <property type="match status" value="1"/>
</dbReference>
<dbReference type="PANTHER" id="PTHR22793">
    <property type="entry name" value="MYOCARDIN-RELATED TRANSCRIPTION FACTOR-RELATED"/>
    <property type="match status" value="1"/>
</dbReference>
<dbReference type="Pfam" id="PF02755">
    <property type="entry name" value="RPEL"/>
    <property type="match status" value="2"/>
</dbReference>
<dbReference type="Pfam" id="PF02037">
    <property type="entry name" value="SAP"/>
    <property type="match status" value="1"/>
</dbReference>
<dbReference type="SMART" id="SM00707">
    <property type="entry name" value="RPEL"/>
    <property type="match status" value="3"/>
</dbReference>
<dbReference type="SMART" id="SM00513">
    <property type="entry name" value="SAP"/>
    <property type="match status" value="1"/>
</dbReference>
<dbReference type="SUPFAM" id="SSF68906">
    <property type="entry name" value="SAP domain"/>
    <property type="match status" value="1"/>
</dbReference>
<dbReference type="PROSITE" id="PS51073">
    <property type="entry name" value="RPEL"/>
    <property type="match status" value="3"/>
</dbReference>
<dbReference type="PROSITE" id="PS50800">
    <property type="entry name" value="SAP"/>
    <property type="match status" value="1"/>
</dbReference>